<organism>
    <name type="scientific">Pseudomonas aeruginosa (strain ATCC 15692 / DSM 22644 / CIP 104116 / JCM 14847 / LMG 12228 / 1C / PRS 101 / PAO1)</name>
    <dbReference type="NCBI Taxonomy" id="208964"/>
    <lineage>
        <taxon>Bacteria</taxon>
        <taxon>Pseudomonadati</taxon>
        <taxon>Pseudomonadota</taxon>
        <taxon>Gammaproteobacteria</taxon>
        <taxon>Pseudomonadales</taxon>
        <taxon>Pseudomonadaceae</taxon>
        <taxon>Pseudomonas</taxon>
    </lineage>
</organism>
<reference key="1">
    <citation type="journal article" date="1992" name="Mol. Microbiol.">
        <title>The fliA (rpoF) gene of Pseudomonas aeruginosa encodes an alternative sigma factor required for flagellin synthesis.</title>
        <authorList>
            <person name="Starnbach M.N."/>
            <person name="Lory S."/>
        </authorList>
    </citation>
    <scope>NUCLEOTIDE SEQUENCE [GENOMIC DNA]</scope>
</reference>
<reference key="2">
    <citation type="journal article" date="2000" name="Nature">
        <title>Complete genome sequence of Pseudomonas aeruginosa PAO1, an opportunistic pathogen.</title>
        <authorList>
            <person name="Stover C.K."/>
            <person name="Pham X.-Q.T."/>
            <person name="Erwin A.L."/>
            <person name="Mizoguchi S.D."/>
            <person name="Warrener P."/>
            <person name="Hickey M.J."/>
            <person name="Brinkman F.S.L."/>
            <person name="Hufnagle W.O."/>
            <person name="Kowalik D.J."/>
            <person name="Lagrou M."/>
            <person name="Garber R.L."/>
            <person name="Goltry L."/>
            <person name="Tolentino E."/>
            <person name="Westbrock-Wadman S."/>
            <person name="Yuan Y."/>
            <person name="Brody L.L."/>
            <person name="Coulter S.N."/>
            <person name="Folger K.R."/>
            <person name="Kas A."/>
            <person name="Larbig K."/>
            <person name="Lim R.M."/>
            <person name="Smith K.A."/>
            <person name="Spencer D.H."/>
            <person name="Wong G.K.-S."/>
            <person name="Wu Z."/>
            <person name="Paulsen I.T."/>
            <person name="Reizer J."/>
            <person name="Saier M.H. Jr."/>
            <person name="Hancock R.E.W."/>
            <person name="Lory S."/>
            <person name="Olson M.V."/>
        </authorList>
    </citation>
    <scope>NUCLEOTIDE SEQUENCE [LARGE SCALE GENOMIC DNA]</scope>
    <source>
        <strain>ATCC 15692 / DSM 22644 / CIP 104116 / JCM 14847 / LMG 12228 / 1C / PRS 101 / PAO1</strain>
    </source>
</reference>
<reference key="3">
    <citation type="journal article" date="1995" name="J. Bacteriol.">
        <title>Isolation and characterization of chemotaxis mutants and genes of Pseudomonas aeruginosa.</title>
        <authorList>
            <person name="Masduki A."/>
            <person name="Nakamura J."/>
            <person name="Ohga T."/>
            <person name="Umezaki R."/>
            <person name="Kato J."/>
            <person name="Ohtake H."/>
        </authorList>
    </citation>
    <scope>NUCLEOTIDE SEQUENCE [GENOMIC DNA] OF 92-124</scope>
    <scope>FUNCTION</scope>
    <source>
        <strain>ATCC 15692 / DSM 22644 / CIP 104116 / JCM 14847 / LMG 12228 / 1C / PRS 101 / PAO1</strain>
    </source>
</reference>
<protein>
    <recommendedName>
        <fullName>Chemotaxis protein CheY</fullName>
    </recommendedName>
</protein>
<comment type="function">
    <text evidence="4">Involved in the transmission of sensory signals from the chemoreceptors to the flagellar motors (PubMed:7860605). CheY is likely to be involved in changing the direction of flagellar rotation (PubMed:7860605).</text>
</comment>
<comment type="cofactor">
    <cofactor evidence="2">
        <name>Mg(2+)</name>
        <dbReference type="ChEBI" id="CHEBI:18420"/>
    </cofactor>
    <text evidence="2">Binds 1 Mg(2+) ion per subunit.</text>
</comment>
<comment type="subcellular location">
    <subcellularLocation>
        <location evidence="5">Cytoplasm</location>
    </subcellularLocation>
</comment>
<feature type="chain" id="PRO_0000081054" description="Chemotaxis protein CheY">
    <location>
        <begin position="1"/>
        <end position="124"/>
    </location>
</feature>
<feature type="domain" description="Response regulatory" evidence="3">
    <location>
        <begin position="2"/>
        <end position="119"/>
    </location>
</feature>
<feature type="binding site" evidence="1">
    <location>
        <position position="7"/>
    </location>
    <ligand>
        <name>Mg(2+)</name>
        <dbReference type="ChEBI" id="CHEBI:18420"/>
    </ligand>
</feature>
<feature type="binding site" evidence="2">
    <location>
        <position position="8"/>
    </location>
    <ligand>
        <name>Mg(2+)</name>
        <dbReference type="ChEBI" id="CHEBI:18420"/>
    </ligand>
</feature>
<feature type="binding site" evidence="2">
    <location>
        <position position="52"/>
    </location>
    <ligand>
        <name>Mg(2+)</name>
        <dbReference type="ChEBI" id="CHEBI:18420"/>
    </ligand>
</feature>
<feature type="binding site" evidence="2">
    <location>
        <position position="54"/>
    </location>
    <ligand>
        <name>Mg(2+)</name>
        <dbReference type="ChEBI" id="CHEBI:18420"/>
    </ligand>
</feature>
<feature type="modified residue" description="4-aspartylphosphate" evidence="3">
    <location>
        <position position="52"/>
    </location>
</feature>
<keyword id="KW-0145">Chemotaxis</keyword>
<keyword id="KW-0963">Cytoplasm</keyword>
<keyword id="KW-0283">Flagellar rotation</keyword>
<keyword id="KW-0460">Magnesium</keyword>
<keyword id="KW-0479">Metal-binding</keyword>
<keyword id="KW-0597">Phosphoprotein</keyword>
<keyword id="KW-1185">Reference proteome</keyword>
<keyword id="KW-0902">Two-component regulatory system</keyword>
<accession>Q51455</accession>
<proteinExistence type="inferred from homology"/>
<sequence>MKILIVDDFSTMRRIIKNLLRDLGFTNTAEADDGTTALPMLHSGNFDFLVTDWNMPGMTGIDLLRAVRADERLKHLPVLMVTAEAKRDQIIEAAQAGVNGYVVKPFTAQVLKEKIEKIFERVNG</sequence>
<name>CHEY_PSEAE</name>
<gene>
    <name type="primary">cheY</name>
    <name type="ordered locus">PA1456</name>
</gene>
<evidence type="ECO:0000250" key="1">
    <source>
        <dbReference type="UniProtKB" id="A0A0H3AMJ9"/>
    </source>
</evidence>
<evidence type="ECO:0000250" key="2">
    <source>
        <dbReference type="UniProtKB" id="P0AE67"/>
    </source>
</evidence>
<evidence type="ECO:0000255" key="3">
    <source>
        <dbReference type="PROSITE-ProRule" id="PRU00169"/>
    </source>
</evidence>
<evidence type="ECO:0000269" key="4">
    <source>
    </source>
</evidence>
<evidence type="ECO:0000305" key="5"/>
<dbReference type="EMBL" id="X61231">
    <property type="protein sequence ID" value="CAA43549.1"/>
    <property type="molecule type" value="Genomic_DNA"/>
</dbReference>
<dbReference type="EMBL" id="AE004091">
    <property type="protein sequence ID" value="AAG04845.1"/>
    <property type="molecule type" value="Genomic_DNA"/>
</dbReference>
<dbReference type="PIR" id="S20545">
    <property type="entry name" value="S20545"/>
</dbReference>
<dbReference type="RefSeq" id="NP_250147.1">
    <property type="nucleotide sequence ID" value="NC_002516.2"/>
</dbReference>
<dbReference type="RefSeq" id="WP_003083073.1">
    <property type="nucleotide sequence ID" value="NZ_QZGE01000005.1"/>
</dbReference>
<dbReference type="SMR" id="Q51455"/>
<dbReference type="FunCoup" id="Q51455">
    <property type="interactions" value="190"/>
</dbReference>
<dbReference type="STRING" id="208964.PA1456"/>
<dbReference type="PaxDb" id="208964-PA1456"/>
<dbReference type="DNASU" id="882097"/>
<dbReference type="GeneID" id="882097"/>
<dbReference type="KEGG" id="pae:PA1456"/>
<dbReference type="PATRIC" id="fig|208964.12.peg.1507"/>
<dbReference type="PseudoCAP" id="PA1456"/>
<dbReference type="HOGENOM" id="CLU_000445_69_12_6"/>
<dbReference type="InParanoid" id="Q51455"/>
<dbReference type="OrthoDB" id="9800897at2"/>
<dbReference type="PhylomeDB" id="Q51455"/>
<dbReference type="BioCyc" id="PAER208964:G1FZ6-1482-MONOMER"/>
<dbReference type="Proteomes" id="UP000002438">
    <property type="component" value="Chromosome"/>
</dbReference>
<dbReference type="GO" id="GO:0005737">
    <property type="term" value="C:cytoplasm"/>
    <property type="evidence" value="ECO:0007669"/>
    <property type="project" value="UniProtKB-SubCell"/>
</dbReference>
<dbReference type="GO" id="GO:0046872">
    <property type="term" value="F:metal ion binding"/>
    <property type="evidence" value="ECO:0007669"/>
    <property type="project" value="UniProtKB-KW"/>
</dbReference>
<dbReference type="GO" id="GO:0097588">
    <property type="term" value="P:archaeal or bacterial-type flagellum-dependent cell motility"/>
    <property type="evidence" value="ECO:0007669"/>
    <property type="project" value="UniProtKB-KW"/>
</dbReference>
<dbReference type="GO" id="GO:0006935">
    <property type="term" value="P:chemotaxis"/>
    <property type="evidence" value="ECO:0007669"/>
    <property type="project" value="UniProtKB-KW"/>
</dbReference>
<dbReference type="GO" id="GO:0000160">
    <property type="term" value="P:phosphorelay signal transduction system"/>
    <property type="evidence" value="ECO:0007669"/>
    <property type="project" value="UniProtKB-KW"/>
</dbReference>
<dbReference type="GO" id="GO:1900192">
    <property type="term" value="P:positive regulation of single-species biofilm formation"/>
    <property type="evidence" value="ECO:0000315"/>
    <property type="project" value="PseudoCAP"/>
</dbReference>
<dbReference type="CDD" id="cd19923">
    <property type="entry name" value="REC_CheY_CheY3"/>
    <property type="match status" value="1"/>
</dbReference>
<dbReference type="FunFam" id="3.40.50.2300:FF:000019">
    <property type="entry name" value="Chemotaxis response regulator CheY"/>
    <property type="match status" value="1"/>
</dbReference>
<dbReference type="Gene3D" id="3.40.50.2300">
    <property type="match status" value="1"/>
</dbReference>
<dbReference type="InterPro" id="IPR050595">
    <property type="entry name" value="Bact_response_regulator"/>
</dbReference>
<dbReference type="InterPro" id="IPR011006">
    <property type="entry name" value="CheY-like_superfamily"/>
</dbReference>
<dbReference type="InterPro" id="IPR001789">
    <property type="entry name" value="Sig_transdc_resp-reg_receiver"/>
</dbReference>
<dbReference type="PANTHER" id="PTHR44591:SF3">
    <property type="entry name" value="RESPONSE REGULATORY DOMAIN-CONTAINING PROTEIN"/>
    <property type="match status" value="1"/>
</dbReference>
<dbReference type="PANTHER" id="PTHR44591">
    <property type="entry name" value="STRESS RESPONSE REGULATOR PROTEIN 1"/>
    <property type="match status" value="1"/>
</dbReference>
<dbReference type="Pfam" id="PF00072">
    <property type="entry name" value="Response_reg"/>
    <property type="match status" value="1"/>
</dbReference>
<dbReference type="SMART" id="SM00448">
    <property type="entry name" value="REC"/>
    <property type="match status" value="1"/>
</dbReference>
<dbReference type="SUPFAM" id="SSF52172">
    <property type="entry name" value="CheY-like"/>
    <property type="match status" value="1"/>
</dbReference>
<dbReference type="PROSITE" id="PS50110">
    <property type="entry name" value="RESPONSE_REGULATORY"/>
    <property type="match status" value="1"/>
</dbReference>